<name>SNMP2_DROME</name>
<reference evidence="8 10" key="1">
    <citation type="journal article" date="2009" name="Insect Biochem. Mol. Biol.">
        <title>The insect SNMP gene family.</title>
        <authorList>
            <person name="Vogt R.G."/>
            <person name="Miller N.E."/>
            <person name="Litvack R."/>
            <person name="Fandino R.A."/>
            <person name="Sparks J."/>
            <person name="Staples J."/>
            <person name="Friedman R."/>
            <person name="Dickens J.C."/>
        </authorList>
    </citation>
    <scope>NUCLEOTIDE SEQUENCE [MRNA] (ISOFORM C)</scope>
    <scope>TISSUE SPECIFICITY</scope>
</reference>
<reference evidence="11" key="2">
    <citation type="journal article" date="2000" name="Science">
        <title>The genome sequence of Drosophila melanogaster.</title>
        <authorList>
            <person name="Adams M.D."/>
            <person name="Celniker S.E."/>
            <person name="Holt R.A."/>
            <person name="Evans C.A."/>
            <person name="Gocayne J.D."/>
            <person name="Amanatides P.G."/>
            <person name="Scherer S.E."/>
            <person name="Li P.W."/>
            <person name="Hoskins R.A."/>
            <person name="Galle R.F."/>
            <person name="George R.A."/>
            <person name="Lewis S.E."/>
            <person name="Richards S."/>
            <person name="Ashburner M."/>
            <person name="Henderson S.N."/>
            <person name="Sutton G.G."/>
            <person name="Wortman J.R."/>
            <person name="Yandell M.D."/>
            <person name="Zhang Q."/>
            <person name="Chen L.X."/>
            <person name="Brandon R.C."/>
            <person name="Rogers Y.-H.C."/>
            <person name="Blazej R.G."/>
            <person name="Champe M."/>
            <person name="Pfeiffer B.D."/>
            <person name="Wan K.H."/>
            <person name="Doyle C."/>
            <person name="Baxter E.G."/>
            <person name="Helt G."/>
            <person name="Nelson C.R."/>
            <person name="Miklos G.L.G."/>
            <person name="Abril J.F."/>
            <person name="Agbayani A."/>
            <person name="An H.-J."/>
            <person name="Andrews-Pfannkoch C."/>
            <person name="Baldwin D."/>
            <person name="Ballew R.M."/>
            <person name="Basu A."/>
            <person name="Baxendale J."/>
            <person name="Bayraktaroglu L."/>
            <person name="Beasley E.M."/>
            <person name="Beeson K.Y."/>
            <person name="Benos P.V."/>
            <person name="Berman B.P."/>
            <person name="Bhandari D."/>
            <person name="Bolshakov S."/>
            <person name="Borkova D."/>
            <person name="Botchan M.R."/>
            <person name="Bouck J."/>
            <person name="Brokstein P."/>
            <person name="Brottier P."/>
            <person name="Burtis K.C."/>
            <person name="Busam D.A."/>
            <person name="Butler H."/>
            <person name="Cadieu E."/>
            <person name="Center A."/>
            <person name="Chandra I."/>
            <person name="Cherry J.M."/>
            <person name="Cawley S."/>
            <person name="Dahlke C."/>
            <person name="Davenport L.B."/>
            <person name="Davies P."/>
            <person name="de Pablos B."/>
            <person name="Delcher A."/>
            <person name="Deng Z."/>
            <person name="Mays A.D."/>
            <person name="Dew I."/>
            <person name="Dietz S.M."/>
            <person name="Dodson K."/>
            <person name="Doup L.E."/>
            <person name="Downes M."/>
            <person name="Dugan-Rocha S."/>
            <person name="Dunkov B.C."/>
            <person name="Dunn P."/>
            <person name="Durbin K.J."/>
            <person name="Evangelista C.C."/>
            <person name="Ferraz C."/>
            <person name="Ferriera S."/>
            <person name="Fleischmann W."/>
            <person name="Fosler C."/>
            <person name="Gabrielian A.E."/>
            <person name="Garg N.S."/>
            <person name="Gelbart W.M."/>
            <person name="Glasser K."/>
            <person name="Glodek A."/>
            <person name="Gong F."/>
            <person name="Gorrell J.H."/>
            <person name="Gu Z."/>
            <person name="Guan P."/>
            <person name="Harris M."/>
            <person name="Harris N.L."/>
            <person name="Harvey D.A."/>
            <person name="Heiman T.J."/>
            <person name="Hernandez J.R."/>
            <person name="Houck J."/>
            <person name="Hostin D."/>
            <person name="Houston K.A."/>
            <person name="Howland T.J."/>
            <person name="Wei M.-H."/>
            <person name="Ibegwam C."/>
            <person name="Jalali M."/>
            <person name="Kalush F."/>
            <person name="Karpen G.H."/>
            <person name="Ke Z."/>
            <person name="Kennison J.A."/>
            <person name="Ketchum K.A."/>
            <person name="Kimmel B.E."/>
            <person name="Kodira C.D."/>
            <person name="Kraft C.L."/>
            <person name="Kravitz S."/>
            <person name="Kulp D."/>
            <person name="Lai Z."/>
            <person name="Lasko P."/>
            <person name="Lei Y."/>
            <person name="Levitsky A.A."/>
            <person name="Li J.H."/>
            <person name="Li Z."/>
            <person name="Liang Y."/>
            <person name="Lin X."/>
            <person name="Liu X."/>
            <person name="Mattei B."/>
            <person name="McIntosh T.C."/>
            <person name="McLeod M.P."/>
            <person name="McPherson D."/>
            <person name="Merkulov G."/>
            <person name="Milshina N.V."/>
            <person name="Mobarry C."/>
            <person name="Morris J."/>
            <person name="Moshrefi A."/>
            <person name="Mount S.M."/>
            <person name="Moy M."/>
            <person name="Murphy B."/>
            <person name="Murphy L."/>
            <person name="Muzny D.M."/>
            <person name="Nelson D.L."/>
            <person name="Nelson D.R."/>
            <person name="Nelson K.A."/>
            <person name="Nixon K."/>
            <person name="Nusskern D.R."/>
            <person name="Pacleb J.M."/>
            <person name="Palazzolo M."/>
            <person name="Pittman G.S."/>
            <person name="Pan S."/>
            <person name="Pollard J."/>
            <person name="Puri V."/>
            <person name="Reese M.G."/>
            <person name="Reinert K."/>
            <person name="Remington K."/>
            <person name="Saunders R.D.C."/>
            <person name="Scheeler F."/>
            <person name="Shen H."/>
            <person name="Shue B.C."/>
            <person name="Siden-Kiamos I."/>
            <person name="Simpson M."/>
            <person name="Skupski M.P."/>
            <person name="Smith T.J."/>
            <person name="Spier E."/>
            <person name="Spradling A.C."/>
            <person name="Stapleton M."/>
            <person name="Strong R."/>
            <person name="Sun E."/>
            <person name="Svirskas R."/>
            <person name="Tector C."/>
            <person name="Turner R."/>
            <person name="Venter E."/>
            <person name="Wang A.H."/>
            <person name="Wang X."/>
            <person name="Wang Z.-Y."/>
            <person name="Wassarman D.A."/>
            <person name="Weinstock G.M."/>
            <person name="Weissenbach J."/>
            <person name="Williams S.M."/>
            <person name="Woodage T."/>
            <person name="Worley K.C."/>
            <person name="Wu D."/>
            <person name="Yang S."/>
            <person name="Yao Q.A."/>
            <person name="Ye J."/>
            <person name="Yeh R.-F."/>
            <person name="Zaveri J.S."/>
            <person name="Zhan M."/>
            <person name="Zhang G."/>
            <person name="Zhao Q."/>
            <person name="Zheng L."/>
            <person name="Zheng X.H."/>
            <person name="Zhong F.N."/>
            <person name="Zhong W."/>
            <person name="Zhou X."/>
            <person name="Zhu S.C."/>
            <person name="Zhu X."/>
            <person name="Smith H.O."/>
            <person name="Gibbs R.A."/>
            <person name="Myers E.W."/>
            <person name="Rubin G.M."/>
            <person name="Venter J.C."/>
        </authorList>
    </citation>
    <scope>NUCLEOTIDE SEQUENCE [LARGE SCALE GENOMIC DNA]</scope>
    <source>
        <strain>Berkeley</strain>
    </source>
</reference>
<reference evidence="8 11" key="3">
    <citation type="journal article" date="2002" name="Genome Biol.">
        <title>Annotation of the Drosophila melanogaster euchromatic genome: a systematic review.</title>
        <authorList>
            <person name="Misra S."/>
            <person name="Crosby M.A."/>
            <person name="Mungall C.J."/>
            <person name="Matthews B.B."/>
            <person name="Campbell K.S."/>
            <person name="Hradecky P."/>
            <person name="Huang Y."/>
            <person name="Kaminker J.S."/>
            <person name="Millburn G.H."/>
            <person name="Prochnik S.E."/>
            <person name="Smith C.D."/>
            <person name="Tupy J.L."/>
            <person name="Whitfield E.J."/>
            <person name="Bayraktaroglu L."/>
            <person name="Berman B.P."/>
            <person name="Bettencourt B.R."/>
            <person name="Celniker S.E."/>
            <person name="de Grey A.D.N.J."/>
            <person name="Drysdale R.A."/>
            <person name="Harris N.L."/>
            <person name="Richter J."/>
            <person name="Russo S."/>
            <person name="Schroeder A.J."/>
            <person name="Shu S.Q."/>
            <person name="Stapleton M."/>
            <person name="Yamada C."/>
            <person name="Ashburner M."/>
            <person name="Gelbart W.M."/>
            <person name="Rubin G.M."/>
            <person name="Lewis S.E."/>
        </authorList>
    </citation>
    <scope>GENOME REANNOTATION</scope>
    <scope>ALTERNATIVE SPLICING</scope>
    <source>
        <strain>Berkeley</strain>
    </source>
</reference>
<reference evidence="8 9" key="4">
    <citation type="submission" date="2009-10" db="EMBL/GenBank/DDBJ databases">
        <authorList>
            <person name="Stapleton M."/>
            <person name="Carlson J."/>
            <person name="Booth B."/>
            <person name="Frise E."/>
            <person name="Kapadia B."/>
            <person name="Park S."/>
            <person name="Wan K."/>
            <person name="Yu C."/>
            <person name="Celniker S."/>
        </authorList>
    </citation>
    <scope>NUCLEOTIDE SEQUENCE [LARGE SCALE MRNA] (ISOFORM C)</scope>
    <source>
        <strain>Berkeley</strain>
    </source>
</reference>
<dbReference type="EMBL" id="EU189152">
    <property type="protein sequence ID" value="ABW70129.1"/>
    <property type="molecule type" value="mRNA"/>
</dbReference>
<dbReference type="EMBL" id="AE014296">
    <property type="protein sequence ID" value="ABI31242.1"/>
    <property type="molecule type" value="Genomic_DNA"/>
</dbReference>
<dbReference type="EMBL" id="AE014296">
    <property type="protein sequence ID" value="ACZ94643.1"/>
    <property type="molecule type" value="Genomic_DNA"/>
</dbReference>
<dbReference type="EMBL" id="BT029278">
    <property type="protein sequence ID" value="ABK30915.1"/>
    <property type="status" value="ALT_SEQ"/>
    <property type="molecule type" value="mRNA"/>
</dbReference>
<dbReference type="EMBL" id="BT029647">
    <property type="protein sequence ID" value="ABL75706.1"/>
    <property type="status" value="ALT_FRAME"/>
    <property type="molecule type" value="mRNA"/>
</dbReference>
<dbReference type="EMBL" id="BT029648">
    <property type="protein sequence ID" value="ABL75707.1"/>
    <property type="status" value="ALT_SEQ"/>
    <property type="molecule type" value="mRNA"/>
</dbReference>
<dbReference type="EMBL" id="BT029668">
    <property type="protein sequence ID" value="ABL75725.1"/>
    <property type="molecule type" value="mRNA"/>
</dbReference>
<dbReference type="EMBL" id="BT029968">
    <property type="protein sequence ID" value="ABM92842.1"/>
    <property type="molecule type" value="mRNA"/>
</dbReference>
<dbReference type="EMBL" id="BT029669">
    <property type="protein sequence ID" value="ABL75726.1"/>
    <property type="molecule type" value="mRNA"/>
</dbReference>
<dbReference type="EMBL" id="BT099997">
    <property type="protein sequence ID" value="ACX54881.1"/>
    <property type="status" value="ALT_FRAME"/>
    <property type="molecule type" value="mRNA"/>
</dbReference>
<dbReference type="RefSeq" id="NP_001036593.1">
    <molecule id="E1JI63-2"/>
    <property type="nucleotide sequence ID" value="NM_001043128.2"/>
</dbReference>
<dbReference type="RefSeq" id="NP_001163372.1">
    <molecule id="E1JI63-1"/>
    <property type="nucleotide sequence ID" value="NM_001169901.1"/>
</dbReference>
<dbReference type="RefSeq" id="NP_001261539.1">
    <molecule id="E1JI63-1"/>
    <property type="nucleotide sequence ID" value="NM_001274610.1"/>
</dbReference>
<dbReference type="SMR" id="E1JI63"/>
<dbReference type="FunCoup" id="E1JI63">
    <property type="interactions" value="8"/>
</dbReference>
<dbReference type="STRING" id="7227.FBpp0306711"/>
<dbReference type="GlyCosmos" id="E1JI63">
    <property type="glycosylation" value="4 sites, No reported glycans"/>
</dbReference>
<dbReference type="GlyGen" id="E1JI63">
    <property type="glycosylation" value="4 sites"/>
</dbReference>
<dbReference type="PaxDb" id="7227-FBpp0290423"/>
<dbReference type="EnsemblMetazoa" id="FBtr0110885">
    <molecule id="E1JI63-2"/>
    <property type="protein sequence ID" value="FBpp0110185"/>
    <property type="gene ID" value="FBgn0035815"/>
</dbReference>
<dbReference type="EnsemblMetazoa" id="FBtr0301205">
    <molecule id="E1JI63-1"/>
    <property type="protein sequence ID" value="FBpp0290423"/>
    <property type="gene ID" value="FBgn0035815"/>
</dbReference>
<dbReference type="EnsemblMetazoa" id="FBtr0334649">
    <molecule id="E1JI63-1"/>
    <property type="protein sequence ID" value="FBpp0306711"/>
    <property type="gene ID" value="FBgn0035815"/>
</dbReference>
<dbReference type="GeneID" id="38868"/>
<dbReference type="KEGG" id="dme:Dmel_CG7422"/>
<dbReference type="UCSC" id="CG7422-RB">
    <property type="organism name" value="d. melanogaster"/>
</dbReference>
<dbReference type="AGR" id="FB:FBgn0035815"/>
<dbReference type="CTD" id="38868"/>
<dbReference type="FlyBase" id="FBgn0035815">
    <property type="gene designation" value="Snmp2"/>
</dbReference>
<dbReference type="VEuPathDB" id="VectorBase:FBgn0035815"/>
<dbReference type="eggNOG" id="KOG3776">
    <property type="taxonomic scope" value="Eukaryota"/>
</dbReference>
<dbReference type="InParanoid" id="E1JI63"/>
<dbReference type="OMA" id="QYRQKDN"/>
<dbReference type="OrthoDB" id="195015at2759"/>
<dbReference type="PhylomeDB" id="E1JI63"/>
<dbReference type="Reactome" id="R-DME-114608">
    <property type="pathway name" value="Platelet degranulation"/>
</dbReference>
<dbReference type="Reactome" id="R-DME-1236973">
    <property type="pathway name" value="Cross-presentation of particulate exogenous antigens (phagosomes)"/>
</dbReference>
<dbReference type="Reactome" id="R-DME-434313">
    <property type="pathway name" value="Intracellular metabolism of fatty acids regulates insulin secretion"/>
</dbReference>
<dbReference type="Reactome" id="R-DME-6798695">
    <property type="pathway name" value="Neutrophil degranulation"/>
</dbReference>
<dbReference type="Reactome" id="R-DME-8856825">
    <property type="pathway name" value="Cargo recognition for clathrin-mediated endocytosis"/>
</dbReference>
<dbReference type="Reactome" id="R-DME-8856828">
    <property type="pathway name" value="Clathrin-mediated endocytosis"/>
</dbReference>
<dbReference type="BioGRID-ORCS" id="38868">
    <property type="hits" value="0 hits in 3 CRISPR screens"/>
</dbReference>
<dbReference type="ChiTaRS" id="Snmp2">
    <property type="organism name" value="fly"/>
</dbReference>
<dbReference type="GenomeRNAi" id="38868"/>
<dbReference type="PRO" id="PR:E1JI63"/>
<dbReference type="Proteomes" id="UP000000803">
    <property type="component" value="Chromosome 3L"/>
</dbReference>
<dbReference type="Bgee" id="FBgn0035815">
    <property type="expression patterns" value="Expressed in visual pigment cell (sensu Nematoda and Protostomia) in testis and 85 other cell types or tissues"/>
</dbReference>
<dbReference type="ExpressionAtlas" id="E1JI63">
    <property type="expression patterns" value="baseline and differential"/>
</dbReference>
<dbReference type="GO" id="GO:0016020">
    <property type="term" value="C:membrane"/>
    <property type="evidence" value="ECO:0000318"/>
    <property type="project" value="GO_Central"/>
</dbReference>
<dbReference type="GO" id="GO:0005886">
    <property type="term" value="C:plasma membrane"/>
    <property type="evidence" value="ECO:0007669"/>
    <property type="project" value="UniProtKB-SubCell"/>
</dbReference>
<dbReference type="GO" id="GO:0005044">
    <property type="term" value="F:scavenger receptor activity"/>
    <property type="evidence" value="ECO:0000318"/>
    <property type="project" value="GO_Central"/>
</dbReference>
<dbReference type="GO" id="GO:0071444">
    <property type="term" value="P:cellular response to pheromone"/>
    <property type="evidence" value="ECO:0000250"/>
    <property type="project" value="FlyBase"/>
</dbReference>
<dbReference type="GO" id="GO:0007608">
    <property type="term" value="P:sensory perception of smell"/>
    <property type="evidence" value="ECO:0007669"/>
    <property type="project" value="UniProtKB-KW"/>
</dbReference>
<dbReference type="InterPro" id="IPR002159">
    <property type="entry name" value="CD36_fam"/>
</dbReference>
<dbReference type="PANTHER" id="PTHR11923">
    <property type="entry name" value="SCAVENGER RECEPTOR CLASS B TYPE-1 SR-B1"/>
    <property type="match status" value="1"/>
</dbReference>
<dbReference type="PANTHER" id="PTHR11923:SF109">
    <property type="entry name" value="SENSORY NEURON MEMBRANE PROTEIN 2"/>
    <property type="match status" value="1"/>
</dbReference>
<dbReference type="Pfam" id="PF01130">
    <property type="entry name" value="CD36"/>
    <property type="match status" value="1"/>
</dbReference>
<dbReference type="PRINTS" id="PR01609">
    <property type="entry name" value="CD36FAMILY"/>
</dbReference>
<protein>
    <recommendedName>
        <fullName evidence="7 10">Sensory neuron membrane protein 2</fullName>
        <shortName evidence="7">SNMP2Dmel</shortName>
    </recommendedName>
</protein>
<proteinExistence type="evidence at transcript level"/>
<gene>
    <name evidence="10" type="primary">Snmp2</name>
    <name type="ORF">CG7422</name>
</gene>
<comment type="function">
    <text evidence="1">Plays an olfactory role that is not restricted to pheromone sensitivity.</text>
</comment>
<comment type="subcellular location">
    <subcellularLocation>
        <location evidence="1">Cell membrane</location>
        <topology evidence="1">Multi-pass membrane protein</topology>
    </subcellularLocation>
</comment>
<comment type="alternative products">
    <event type="alternative splicing"/>
    <isoform>
        <id>E1JI63-1</id>
        <name evidence="4">C</name>
        <sequence type="displayed"/>
    </isoform>
    <isoform>
        <id>E1JI63-2</id>
        <name evidence="4">B</name>
        <sequence type="described" ref="VSP_042166"/>
    </isoform>
</comment>
<comment type="tissue specificity">
    <text evidence="5">Detected in the head and to a lesser extent in legs and wings.</text>
</comment>
<comment type="similarity">
    <text evidence="3">Belongs to the CD36 family.</text>
</comment>
<comment type="sequence caution" evidence="8">
    <conflict type="miscellaneous discrepancy">
        <sequence resource="EMBL-CDS" id="ABK30915"/>
    </conflict>
    <text>Intron retention.</text>
</comment>
<comment type="sequence caution" evidence="8">
    <conflict type="frameshift">
        <sequence resource="EMBL-CDS" id="ABL75706"/>
    </conflict>
</comment>
<comment type="sequence caution" evidence="8">
    <conflict type="frameshift">
        <sequence resource="EMBL-CDS" id="ABL75707"/>
    </conflict>
</comment>
<comment type="sequence caution" evidence="8">
    <conflict type="miscellaneous discrepancy">
        <sequence resource="EMBL-CDS" id="ABL75707"/>
    </conflict>
    <text>Intron retention.</text>
</comment>
<comment type="sequence caution" evidence="8">
    <conflict type="frameshift">
        <sequence resource="EMBL-CDS" id="ACX54881"/>
    </conflict>
</comment>
<evidence type="ECO:0000250" key="1">
    <source>
        <dbReference type="UniProtKB" id="O02351"/>
    </source>
</evidence>
<evidence type="ECO:0000250" key="2">
    <source>
        <dbReference type="UniProtKB" id="P26201"/>
    </source>
</evidence>
<evidence type="ECO:0000255" key="3"/>
<evidence type="ECO:0000269" key="4">
    <source>
    </source>
</evidence>
<evidence type="ECO:0000269" key="5">
    <source>
    </source>
</evidence>
<evidence type="ECO:0000303" key="6">
    <source>
    </source>
</evidence>
<evidence type="ECO:0000303" key="7">
    <source>
    </source>
</evidence>
<evidence type="ECO:0000305" key="8"/>
<evidence type="ECO:0000312" key="9">
    <source>
        <dbReference type="EMBL" id="ABL75707.1"/>
    </source>
</evidence>
<evidence type="ECO:0000312" key="10">
    <source>
        <dbReference type="EMBL" id="ABW70129.1"/>
    </source>
</evidence>
<evidence type="ECO:0000312" key="11">
    <source>
        <dbReference type="EMBL" id="ACZ94643.1"/>
    </source>
</evidence>
<keyword id="KW-0025">Alternative splicing</keyword>
<keyword id="KW-1003">Cell membrane</keyword>
<keyword id="KW-1015">Disulfide bond</keyword>
<keyword id="KW-0325">Glycoprotein</keyword>
<keyword id="KW-0472">Membrane</keyword>
<keyword id="KW-0552">Olfaction</keyword>
<keyword id="KW-0675">Receptor</keyword>
<keyword id="KW-1185">Reference proteome</keyword>
<keyword id="KW-0716">Sensory transduction</keyword>
<keyword id="KW-0812">Transmembrane</keyword>
<keyword id="KW-1133">Transmembrane helix</keyword>
<sequence length="556" mass="62634">MIHWSLIVSALGVCVAVLGGYCGWILFPNMVHKKVEQSVVIQDGSEQFKRFVNLPQPLNFKVYIFNVTNSDRIQQGAIPIVEEIGPYVYKQFRQKKVKHFSRDGSKISYVQNVHFDFDAVASAPYTQDDRIVALNMHMNAFLQVFEREITDIFQGFANRLNSRLNQTPGVRVLKRLMERIRGKRKSVLQISENDPGLALLLVHLNANLKAVFNDPRSMFVSTSVREYLFDGVRFCINPQGIAKAICNQIKESGSKTIREKSDGSLAFSFFGHKNGSGHEVYEVHTGKGDPMRVLEIQKLDDSHNLQVWLNASSEGETSVCNQINGTDASAYPPFRQRGDSMYIFSADICRSVQLFYQTDIQYQGIPGYRYSIGENFINDIGPEHDNECFCVDKLANVIKRKNGCLYAGALDLTTCLDAPVILTLPHMLGASNEYRKMIRGLKPDAKKHQTFVDVQSLTGTPLQGGKRVQFNMFLKSINRIGITENLPTVLMPAIWVEEGIQLNGEMVAFFKKKLINTLKTLNIVHWATLCGGIGVAVACLIYYIYQRGRVVEPPVK</sequence>
<feature type="chain" id="PRO_0000414928" description="Sensory neuron membrane protein 2">
    <location>
        <begin position="1"/>
        <end position="556"/>
    </location>
</feature>
<feature type="topological domain" description="Cytoplasmic" evidence="3">
    <location>
        <begin position="1"/>
        <end position="6"/>
    </location>
</feature>
<feature type="transmembrane region" description="Helical" evidence="3">
    <location>
        <begin position="7"/>
        <end position="27"/>
    </location>
</feature>
<feature type="topological domain" description="Extracellular" evidence="3">
    <location>
        <begin position="28"/>
        <end position="522"/>
    </location>
</feature>
<feature type="transmembrane region" description="Helical" evidence="3">
    <location>
        <begin position="523"/>
        <end position="543"/>
    </location>
</feature>
<feature type="topological domain" description="Cytoplasmic" evidence="3">
    <location>
        <begin position="544"/>
        <end position="556"/>
    </location>
</feature>
<feature type="glycosylation site" description="N-linked (GlcNAc...) asparagine" evidence="3">
    <location>
        <position position="66"/>
    </location>
</feature>
<feature type="glycosylation site" description="N-linked (GlcNAc...) asparagine" evidence="3">
    <location>
        <position position="274"/>
    </location>
</feature>
<feature type="glycosylation site" description="N-linked (GlcNAc...) asparagine" evidence="3">
    <location>
        <position position="310"/>
    </location>
</feature>
<feature type="glycosylation site" description="N-linked (GlcNAc...) asparagine" evidence="3">
    <location>
        <position position="324"/>
    </location>
</feature>
<feature type="disulfide bond" evidence="2">
    <location>
        <begin position="320"/>
        <end position="388"/>
    </location>
</feature>
<feature type="disulfide bond" evidence="2">
    <location>
        <begin position="349"/>
        <end position="415"/>
    </location>
</feature>
<feature type="splice variant" id="VSP_042166" description="In isoform B." evidence="6">
    <location>
        <begin position="140"/>
        <end position="185"/>
    </location>
</feature>
<feature type="sequence conflict" description="In Ref. 1; ABW70129." evidence="8" ref="1">
    <original>V</original>
    <variation>A</variation>
    <location>
        <position position="120"/>
    </location>
</feature>
<feature type="sequence conflict" description="In Ref. 1; ABW70129." evidence="8" ref="1">
    <original>F</original>
    <variation>S</variation>
    <location>
        <position position="219"/>
    </location>
</feature>
<feature type="sequence conflict" description="In Ref. 1; ABW70129." evidence="8" ref="1">
    <original>N</original>
    <variation>S</variation>
    <location>
        <position position="516"/>
    </location>
</feature>
<organism>
    <name type="scientific">Drosophila melanogaster</name>
    <name type="common">Fruit fly</name>
    <dbReference type="NCBI Taxonomy" id="7227"/>
    <lineage>
        <taxon>Eukaryota</taxon>
        <taxon>Metazoa</taxon>
        <taxon>Ecdysozoa</taxon>
        <taxon>Arthropoda</taxon>
        <taxon>Hexapoda</taxon>
        <taxon>Insecta</taxon>
        <taxon>Pterygota</taxon>
        <taxon>Neoptera</taxon>
        <taxon>Endopterygota</taxon>
        <taxon>Diptera</taxon>
        <taxon>Brachycera</taxon>
        <taxon>Muscomorpha</taxon>
        <taxon>Ephydroidea</taxon>
        <taxon>Drosophilidae</taxon>
        <taxon>Drosophila</taxon>
        <taxon>Sophophora</taxon>
    </lineage>
</organism>
<accession>E1JI63</accession>
<accession>A0AVW0</accession>
<accession>A1A6X6</accession>
<accession>A1A6X7</accession>
<accession>A1A6Z5</accession>
<accession>A1A6Z6</accession>
<accession>A2RVH7</accession>
<accession>A8W3N7</accession>
<accession>C9QPB5</accession>
<accession>Q0E8H2</accession>